<evidence type="ECO:0000250" key="1">
    <source>
        <dbReference type="UniProtKB" id="P50076"/>
    </source>
</evidence>
<evidence type="ECO:0000255" key="2"/>
<evidence type="ECO:0000256" key="3">
    <source>
        <dbReference type="SAM" id="MobiDB-lite"/>
    </source>
</evidence>
<evidence type="ECO:0000305" key="4"/>
<accession>Q5B0M8</accession>
<accession>C8UZU9</accession>
<organism>
    <name type="scientific">Emericella nidulans (strain FGSC A4 / ATCC 38163 / CBS 112.46 / NRRL 194 / M139)</name>
    <name type="common">Aspergillus nidulans</name>
    <dbReference type="NCBI Taxonomy" id="227321"/>
    <lineage>
        <taxon>Eukaryota</taxon>
        <taxon>Fungi</taxon>
        <taxon>Dikarya</taxon>
        <taxon>Ascomycota</taxon>
        <taxon>Pezizomycotina</taxon>
        <taxon>Eurotiomycetes</taxon>
        <taxon>Eurotiomycetidae</taxon>
        <taxon>Eurotiales</taxon>
        <taxon>Aspergillaceae</taxon>
        <taxon>Aspergillus</taxon>
        <taxon>Aspergillus subgen. Nidulantes</taxon>
    </lineage>
</organism>
<name>ALG10_EMENI</name>
<gene>
    <name type="primary">alg10</name>
    <name type="ORF">AN5902</name>
</gene>
<feature type="chain" id="PRO_0000215455" description="Dol-P-Glc:Glc(2)Man(9)GlcNAc(2)-PP-Dol alpha-1,2-glucosyltransferase">
    <location>
        <begin position="1"/>
        <end position="608"/>
    </location>
</feature>
<feature type="transmembrane region" description="Helical" evidence="2">
    <location>
        <begin position="8"/>
        <end position="28"/>
    </location>
</feature>
<feature type="transmembrane region" description="Helical" evidence="2">
    <location>
        <begin position="64"/>
        <end position="84"/>
    </location>
</feature>
<feature type="transmembrane region" description="Helical" evidence="2">
    <location>
        <begin position="143"/>
        <end position="163"/>
    </location>
</feature>
<feature type="transmembrane region" description="Helical" evidence="2">
    <location>
        <begin position="183"/>
        <end position="203"/>
    </location>
</feature>
<feature type="transmembrane region" description="Helical" evidence="2">
    <location>
        <begin position="271"/>
        <end position="291"/>
    </location>
</feature>
<feature type="transmembrane region" description="Helical" evidence="2">
    <location>
        <begin position="312"/>
        <end position="332"/>
    </location>
</feature>
<feature type="transmembrane region" description="Helical" evidence="2">
    <location>
        <begin position="359"/>
        <end position="379"/>
    </location>
</feature>
<feature type="transmembrane region" description="Helical" evidence="2">
    <location>
        <begin position="407"/>
        <end position="427"/>
    </location>
</feature>
<feature type="transmembrane region" description="Helical" evidence="2">
    <location>
        <begin position="507"/>
        <end position="527"/>
    </location>
</feature>
<feature type="transmembrane region" description="Helical" evidence="2">
    <location>
        <begin position="569"/>
        <end position="589"/>
    </location>
</feature>
<feature type="region of interest" description="Disordered" evidence="3">
    <location>
        <begin position="446"/>
        <end position="466"/>
    </location>
</feature>
<feature type="compositionally biased region" description="Basic and acidic residues" evidence="3">
    <location>
        <begin position="451"/>
        <end position="465"/>
    </location>
</feature>
<feature type="glycosylation site" description="N-linked (GlcNAc...) asparagine" evidence="2">
    <location>
        <position position="292"/>
    </location>
</feature>
<keyword id="KW-0256">Endoplasmic reticulum</keyword>
<keyword id="KW-0325">Glycoprotein</keyword>
<keyword id="KW-0328">Glycosyltransferase</keyword>
<keyword id="KW-0472">Membrane</keyword>
<keyword id="KW-1185">Reference proteome</keyword>
<keyword id="KW-0808">Transferase</keyword>
<keyword id="KW-0812">Transmembrane</keyword>
<keyword id="KW-1133">Transmembrane helix</keyword>
<reference key="1">
    <citation type="journal article" date="2005" name="Nature">
        <title>Sequencing of Aspergillus nidulans and comparative analysis with A. fumigatus and A. oryzae.</title>
        <authorList>
            <person name="Galagan J.E."/>
            <person name="Calvo S.E."/>
            <person name="Cuomo C."/>
            <person name="Ma L.-J."/>
            <person name="Wortman J.R."/>
            <person name="Batzoglou S."/>
            <person name="Lee S.-I."/>
            <person name="Bastuerkmen M."/>
            <person name="Spevak C.C."/>
            <person name="Clutterbuck J."/>
            <person name="Kapitonov V."/>
            <person name="Jurka J."/>
            <person name="Scazzocchio C."/>
            <person name="Farman M.L."/>
            <person name="Butler J."/>
            <person name="Purcell S."/>
            <person name="Harris S."/>
            <person name="Braus G.H."/>
            <person name="Draht O."/>
            <person name="Busch S."/>
            <person name="D'Enfert C."/>
            <person name="Bouchier C."/>
            <person name="Goldman G.H."/>
            <person name="Bell-Pedersen D."/>
            <person name="Griffiths-Jones S."/>
            <person name="Doonan J.H."/>
            <person name="Yu J."/>
            <person name="Vienken K."/>
            <person name="Pain A."/>
            <person name="Freitag M."/>
            <person name="Selker E.U."/>
            <person name="Archer D.B."/>
            <person name="Penalva M.A."/>
            <person name="Oakley B.R."/>
            <person name="Momany M."/>
            <person name="Tanaka T."/>
            <person name="Kumagai T."/>
            <person name="Asai K."/>
            <person name="Machida M."/>
            <person name="Nierman W.C."/>
            <person name="Denning D.W."/>
            <person name="Caddick M.X."/>
            <person name="Hynes M."/>
            <person name="Paoletti M."/>
            <person name="Fischer R."/>
            <person name="Miller B.L."/>
            <person name="Dyer P.S."/>
            <person name="Sachs M.S."/>
            <person name="Osmani S.A."/>
            <person name="Birren B.W."/>
        </authorList>
    </citation>
    <scope>NUCLEOTIDE SEQUENCE [LARGE SCALE GENOMIC DNA]</scope>
    <source>
        <strain>FGSC A4 / ATCC 38163 / CBS 112.46 / NRRL 194 / M139</strain>
    </source>
</reference>
<reference key="2">
    <citation type="journal article" date="2009" name="Fungal Genet. Biol.">
        <title>The 2008 update of the Aspergillus nidulans genome annotation: a community effort.</title>
        <authorList>
            <person name="Wortman J.R."/>
            <person name="Gilsenan J.M."/>
            <person name="Joardar V."/>
            <person name="Deegan J."/>
            <person name="Clutterbuck J."/>
            <person name="Andersen M.R."/>
            <person name="Archer D."/>
            <person name="Bencina M."/>
            <person name="Braus G."/>
            <person name="Coutinho P."/>
            <person name="von Dohren H."/>
            <person name="Doonan J."/>
            <person name="Driessen A.J."/>
            <person name="Durek P."/>
            <person name="Espeso E."/>
            <person name="Fekete E."/>
            <person name="Flipphi M."/>
            <person name="Estrada C.G."/>
            <person name="Geysens S."/>
            <person name="Goldman G."/>
            <person name="de Groot P.W."/>
            <person name="Hansen K."/>
            <person name="Harris S.D."/>
            <person name="Heinekamp T."/>
            <person name="Helmstaedt K."/>
            <person name="Henrissat B."/>
            <person name="Hofmann G."/>
            <person name="Homan T."/>
            <person name="Horio T."/>
            <person name="Horiuchi H."/>
            <person name="James S."/>
            <person name="Jones M."/>
            <person name="Karaffa L."/>
            <person name="Karanyi Z."/>
            <person name="Kato M."/>
            <person name="Keller N."/>
            <person name="Kelly D.E."/>
            <person name="Kiel J.A."/>
            <person name="Kim J.M."/>
            <person name="van der Klei I.J."/>
            <person name="Klis F.M."/>
            <person name="Kovalchuk A."/>
            <person name="Krasevec N."/>
            <person name="Kubicek C.P."/>
            <person name="Liu B."/>
            <person name="Maccabe A."/>
            <person name="Meyer V."/>
            <person name="Mirabito P."/>
            <person name="Miskei M."/>
            <person name="Mos M."/>
            <person name="Mullins J."/>
            <person name="Nelson D.R."/>
            <person name="Nielsen J."/>
            <person name="Oakley B.R."/>
            <person name="Osmani S.A."/>
            <person name="Pakula T."/>
            <person name="Paszewski A."/>
            <person name="Paulsen I."/>
            <person name="Pilsyk S."/>
            <person name="Pocsi I."/>
            <person name="Punt P.J."/>
            <person name="Ram A.F."/>
            <person name="Ren Q."/>
            <person name="Robellet X."/>
            <person name="Robson G."/>
            <person name="Seiboth B."/>
            <person name="van Solingen P."/>
            <person name="Specht T."/>
            <person name="Sun J."/>
            <person name="Taheri-Talesh N."/>
            <person name="Takeshita N."/>
            <person name="Ussery D."/>
            <person name="vanKuyk P.A."/>
            <person name="Visser H."/>
            <person name="van de Vondervoort P.J."/>
            <person name="de Vries R.P."/>
            <person name="Walton J."/>
            <person name="Xiang X."/>
            <person name="Xiong Y."/>
            <person name="Zeng A.P."/>
            <person name="Brandt B.W."/>
            <person name="Cornell M.J."/>
            <person name="van den Hondel C.A."/>
            <person name="Visser J."/>
            <person name="Oliver S.G."/>
            <person name="Turner G."/>
        </authorList>
    </citation>
    <scope>GENOME REANNOTATION</scope>
    <source>
        <strain>FGSC A4 / ATCC 38163 / CBS 112.46 / NRRL 194 / M139</strain>
    </source>
</reference>
<comment type="function">
    <text evidence="1">Dol-P-Glc:Glc(2)Man(9)GlcNAc(2)-PP-Dol alpha-1,2-glucosyltransferase that operates in the biosynthetic pathway of dolichol-linked oligosaccharides, the glycan precursors employed in protein asparagine (N)-glycosylation. The assembly of dolichol-linked oligosaccharides begins on the cytosolic side of the endoplasmic reticulum membrane and finishes in its lumen. The sequential addition of sugars to dolichol pyrophosphate produces dolichol-linked oligosaccharides containing fourteen sugars, including two GlcNAcs, nine mannoses and three glucoses. Once assembled, the oligosaccharide is transferred from the lipid to nascent proteins by oligosaccharyltransferases. In the lumen of the endoplasmic reticulum, adds the third and last glucose residue from dolichyl phosphate glucose (Dol-P-Glc) onto the lipid-linked oligosaccharide intermediate Glc(2)Man(9)GlcNAc(2)-PP-Dol to produce Glc(3)Man(9)GlcNAc(2)-PP-Dol.</text>
</comment>
<comment type="catalytic activity">
    <reaction evidence="1">
        <text>an alpha-D-Glc-(1-&gt;3)-alpha-D-Glc-(1-&gt;3)-alpha-D-Man-(1-&gt;2)-alpha-D-Man-(1-&gt;2)-alpha-D-Man-(1-&gt;3)-[alpha-D-Man-(1-&gt;2)-alpha-D-Man-(1-&gt;3)-[alpha-D-Man-(1-&gt;2)-alpha-D-Man-(1-&gt;6)]-alpha-D-Man-(1-&gt;6)]-beta-D-Man-(1-&gt;4)-beta-D-GlcNAc-(1-&gt;4)-alpha-D-GlcNAc-diphospho-di-trans,poly-cis-dolichol + a di-trans,poly-cis-dolichyl beta-D-glucosyl phosphate = a alpha-D-Glc-(1-&gt;2)-alpha-D-Glc-(1-&gt;3)-alpha-D-Glc-(1-&gt;3)-alpha-D-Man-(1-&gt;2)-alpha-D-Man-(1-&gt;2)-alpha-D-Man-(1-&gt;3)-[alpha-D-Man-(1-&gt;2)-alpha-D-Man-(1-&gt;3)-[alpha-D-Man-(1-&gt;2)-alpha-D-Man-(1-&gt;6)]-alpha-D-Man-(1-&gt;6)]-beta-D-Man-(1-&gt;4)-beta-D-GlcNAc-(1-&gt;4)-alpha-D-GlcNAc-diphospho-di-trans,poly-cis-dolichol + a di-trans,poly-cis-dolichyl phosphate + H(+)</text>
        <dbReference type="Rhea" id="RHEA:29543"/>
        <dbReference type="Rhea" id="RHEA-COMP:19498"/>
        <dbReference type="Rhea" id="RHEA-COMP:19502"/>
        <dbReference type="Rhea" id="RHEA-COMP:19512"/>
        <dbReference type="Rhea" id="RHEA-COMP:19522"/>
        <dbReference type="ChEBI" id="CHEBI:15378"/>
        <dbReference type="ChEBI" id="CHEBI:57525"/>
        <dbReference type="ChEBI" id="CHEBI:57683"/>
        <dbReference type="ChEBI" id="CHEBI:132522"/>
        <dbReference type="ChEBI" id="CHEBI:132523"/>
        <dbReference type="EC" id="2.4.1.256"/>
    </reaction>
    <physiologicalReaction direction="left-to-right" evidence="1">
        <dbReference type="Rhea" id="RHEA:29544"/>
    </physiologicalReaction>
</comment>
<comment type="pathway">
    <text evidence="1">Protein modification; protein glycosylation.</text>
</comment>
<comment type="subcellular location">
    <subcellularLocation>
        <location evidence="1">Endoplasmic reticulum membrane</location>
        <topology evidence="2">Multi-pass membrane protein</topology>
    </subcellularLocation>
</comment>
<comment type="similarity">
    <text evidence="4">Belongs to the ALG10 glucosyltransferase family.</text>
</comment>
<dbReference type="EC" id="2.4.1.256" evidence="1"/>
<dbReference type="EMBL" id="AACD01000101">
    <property type="protein sequence ID" value="EAA57765.1"/>
    <property type="molecule type" value="Genomic_DNA"/>
</dbReference>
<dbReference type="EMBL" id="BN001301">
    <property type="protein sequence ID" value="CBF70603.1"/>
    <property type="molecule type" value="Genomic_DNA"/>
</dbReference>
<dbReference type="RefSeq" id="XP_663506.1">
    <property type="nucleotide sequence ID" value="XM_658414.1"/>
</dbReference>
<dbReference type="FunCoup" id="Q5B0M8">
    <property type="interactions" value="664"/>
</dbReference>
<dbReference type="STRING" id="227321.Q5B0M8"/>
<dbReference type="CAZy" id="GT59">
    <property type="family name" value="Glycosyltransferase Family 59"/>
</dbReference>
<dbReference type="GlyCosmos" id="Q5B0M8">
    <property type="glycosylation" value="1 site, No reported glycans"/>
</dbReference>
<dbReference type="EnsemblFungi" id="CBF70603">
    <property type="protein sequence ID" value="CBF70603"/>
    <property type="gene ID" value="ANIA_05902"/>
</dbReference>
<dbReference type="KEGG" id="ani:ANIA_05902"/>
<dbReference type="VEuPathDB" id="FungiDB:AN5902"/>
<dbReference type="eggNOG" id="KOG2642">
    <property type="taxonomic scope" value="Eukaryota"/>
</dbReference>
<dbReference type="HOGENOM" id="CLU_017053_0_0_1"/>
<dbReference type="InParanoid" id="Q5B0M8"/>
<dbReference type="OMA" id="VWDSKIT"/>
<dbReference type="OrthoDB" id="4769at2759"/>
<dbReference type="UniPathway" id="UPA00378"/>
<dbReference type="Proteomes" id="UP000000560">
    <property type="component" value="Chromosome I"/>
</dbReference>
<dbReference type="GO" id="GO:0005783">
    <property type="term" value="C:endoplasmic reticulum"/>
    <property type="evidence" value="ECO:0000318"/>
    <property type="project" value="GO_Central"/>
</dbReference>
<dbReference type="GO" id="GO:0005789">
    <property type="term" value="C:endoplasmic reticulum membrane"/>
    <property type="evidence" value="ECO:0007669"/>
    <property type="project" value="UniProtKB-SubCell"/>
</dbReference>
<dbReference type="GO" id="GO:0106073">
    <property type="term" value="F:dolichyl pyrophosphate Glc2Man9GlcNAc2 alpha-1,2-glucosyltransferase activity"/>
    <property type="evidence" value="ECO:0000318"/>
    <property type="project" value="GO_Central"/>
</dbReference>
<dbReference type="GO" id="GO:0006488">
    <property type="term" value="P:dolichol-linked oligosaccharide biosynthetic process"/>
    <property type="evidence" value="ECO:0007669"/>
    <property type="project" value="InterPro"/>
</dbReference>
<dbReference type="GO" id="GO:0006487">
    <property type="term" value="P:protein N-linked glycosylation"/>
    <property type="evidence" value="ECO:0000318"/>
    <property type="project" value="GO_Central"/>
</dbReference>
<dbReference type="InterPro" id="IPR016900">
    <property type="entry name" value="Alg10"/>
</dbReference>
<dbReference type="PANTHER" id="PTHR12989">
    <property type="entry name" value="ALPHA-1,2-GLUCOSYLTRANSFERASE ALG10"/>
    <property type="match status" value="1"/>
</dbReference>
<dbReference type="PANTHER" id="PTHR12989:SF10">
    <property type="entry name" value="DOL-P-GLC:GLC(2)MAN(9)GLCNAC(2)-PP-DOL ALPHA-1,2-GLUCOSYLTRANSFERASE-RELATED"/>
    <property type="match status" value="1"/>
</dbReference>
<dbReference type="Pfam" id="PF04922">
    <property type="entry name" value="DIE2_ALG10"/>
    <property type="match status" value="1"/>
</dbReference>
<proteinExistence type="inferred from homology"/>
<sequence>MNAQPRSALALAARYAVPFGLLLIPIWMTQVNSVVPEPYLDEAFHIPQAQAYWSHQWTQWDPKITTPPGLYLFSYAVCALILLLRGSPEHLDPPALRATNAAAAAVLLPLRLQTALDTVRKQRNTRPSGAWLSHTVLNICLFPPLFFFSGLYYTDVLALLVVIEAYNWDLSRGRPNAVKLETAVFLVLGVLALLFRQTNIFWVSVFFGGLQVVRRLRRVTKNCESTNVADILAAGSRNELYDPLVLDASLVDYVKTAASLCSVALNNLGSVITSLVPYLIILATFGGFVLWNGSVVMGHKEFHTASLHIAQMLYIWPYFVFFSWPLLLVPMANIVLPKFMLPKFLNQGFPASRRRLPSLLTVLIILPIMLAVVHFNTIVHPFTLADNRHYVFYVFRILLNSHPYTRYVATLVYFLGAWMIISAMGYSPVTAAPGLASVVRTQAPPASATSAEERTEKTQKLERKQKGFKKSAQVASSAPAPIDPKVLADLQEHIRRRQRLEHETSRVSFVLVWLAATALSLISAPLVEPRYLIIPWVMWRLHLPPSPTPVIYRRASDEKDLEARIAVNFPLFLETVWFLLVNVITGTLFLRGGFEWPQEPGKVQRFLW</sequence>
<protein>
    <recommendedName>
        <fullName evidence="1">Dol-P-Glc:Glc(2)Man(9)GlcNAc(2)-PP-Dol alpha-1,2-glucosyltransferase</fullName>
        <ecNumber evidence="1">2.4.1.256</ecNumber>
    </recommendedName>
    <alternativeName>
        <fullName>Alpha-1,2-glucosyltransferase alg10</fullName>
    </alternativeName>
    <alternativeName>
        <fullName>Alpha-2-glucosyltransferase alg10</fullName>
    </alternativeName>
    <alternativeName>
        <fullName>Asparagine-linked glycosylation protein 10</fullName>
    </alternativeName>
    <alternativeName>
        <fullName>Dolichyl-phosphoglucose-dependent glucosyltransferase alg10</fullName>
    </alternativeName>
</protein>